<protein>
    <recommendedName>
        <fullName evidence="1">Homoserine O-succinyltransferase</fullName>
        <shortName evidence="1">HST</shortName>
        <ecNumber evidence="1">2.3.1.46</ecNumber>
    </recommendedName>
    <alternativeName>
        <fullName evidence="1">Homoserine transsuccinylase</fullName>
        <shortName evidence="1">HTS</shortName>
    </alternativeName>
</protein>
<name>METAS_YERPS</name>
<gene>
    <name evidence="1" type="primary">metAS</name>
    <name type="ordered locus">YPTB3658</name>
</gene>
<proteinExistence type="inferred from homology"/>
<reference key="1">
    <citation type="journal article" date="2004" name="Proc. Natl. Acad. Sci. U.S.A.">
        <title>Insights into the evolution of Yersinia pestis through whole-genome comparison with Yersinia pseudotuberculosis.</title>
        <authorList>
            <person name="Chain P.S.G."/>
            <person name="Carniel E."/>
            <person name="Larimer F.W."/>
            <person name="Lamerdin J."/>
            <person name="Stoutland P.O."/>
            <person name="Regala W.M."/>
            <person name="Georgescu A.M."/>
            <person name="Vergez L.M."/>
            <person name="Land M.L."/>
            <person name="Motin V.L."/>
            <person name="Brubaker R.R."/>
            <person name="Fowler J."/>
            <person name="Hinnebusch J."/>
            <person name="Marceau M."/>
            <person name="Medigue C."/>
            <person name="Simonet M."/>
            <person name="Chenal-Francisque V."/>
            <person name="Souza B."/>
            <person name="Dacheux D."/>
            <person name="Elliott J.M."/>
            <person name="Derbise A."/>
            <person name="Hauser L.J."/>
            <person name="Garcia E."/>
        </authorList>
    </citation>
    <scope>NUCLEOTIDE SEQUENCE [LARGE SCALE GENOMIC DNA]</scope>
    <source>
        <strain>IP32953</strain>
    </source>
</reference>
<dbReference type="EC" id="2.3.1.46" evidence="1"/>
<dbReference type="EMBL" id="BX936398">
    <property type="protein sequence ID" value="CAH22896.1"/>
    <property type="molecule type" value="Genomic_DNA"/>
</dbReference>
<dbReference type="SMR" id="Q664W1"/>
<dbReference type="KEGG" id="ypo:BZ17_2939"/>
<dbReference type="KEGG" id="yps:YPTB3658"/>
<dbReference type="PATRIC" id="fig|273123.14.peg.3072"/>
<dbReference type="UniPathway" id="UPA00051">
    <property type="reaction ID" value="UER00075"/>
</dbReference>
<dbReference type="Proteomes" id="UP000001011">
    <property type="component" value="Chromosome"/>
</dbReference>
<dbReference type="GO" id="GO:0005737">
    <property type="term" value="C:cytoplasm"/>
    <property type="evidence" value="ECO:0007669"/>
    <property type="project" value="UniProtKB-SubCell"/>
</dbReference>
<dbReference type="GO" id="GO:0004414">
    <property type="term" value="F:homoserine O-acetyltransferase activity"/>
    <property type="evidence" value="ECO:0007669"/>
    <property type="project" value="UniProtKB-UniRule"/>
</dbReference>
<dbReference type="GO" id="GO:0008899">
    <property type="term" value="F:homoserine O-succinyltransferase activity"/>
    <property type="evidence" value="ECO:0007669"/>
    <property type="project" value="UniProtKB-EC"/>
</dbReference>
<dbReference type="GO" id="GO:0019281">
    <property type="term" value="P:L-methionine biosynthetic process from homoserine via O-succinyl-L-homoserine and cystathionine"/>
    <property type="evidence" value="ECO:0007669"/>
    <property type="project" value="InterPro"/>
</dbReference>
<dbReference type="CDD" id="cd03131">
    <property type="entry name" value="GATase1_HTS"/>
    <property type="match status" value="1"/>
</dbReference>
<dbReference type="FunFam" id="3.40.50.880:FF:000004">
    <property type="entry name" value="Homoserine O-succinyltransferase"/>
    <property type="match status" value="1"/>
</dbReference>
<dbReference type="Gene3D" id="3.40.50.880">
    <property type="match status" value="1"/>
</dbReference>
<dbReference type="HAMAP" id="MF_00295">
    <property type="entry name" value="MetA_acyltransf"/>
    <property type="match status" value="1"/>
</dbReference>
<dbReference type="InterPro" id="IPR029062">
    <property type="entry name" value="Class_I_gatase-like"/>
</dbReference>
<dbReference type="InterPro" id="IPR005697">
    <property type="entry name" value="HST_MetA"/>
</dbReference>
<dbReference type="InterPro" id="IPR033752">
    <property type="entry name" value="MetA_family"/>
</dbReference>
<dbReference type="NCBIfam" id="TIGR01001">
    <property type="entry name" value="metA"/>
    <property type="match status" value="1"/>
</dbReference>
<dbReference type="PANTHER" id="PTHR20919">
    <property type="entry name" value="HOMOSERINE O-SUCCINYLTRANSFERASE"/>
    <property type="match status" value="1"/>
</dbReference>
<dbReference type="PANTHER" id="PTHR20919:SF0">
    <property type="entry name" value="HOMOSERINE O-SUCCINYLTRANSFERASE"/>
    <property type="match status" value="1"/>
</dbReference>
<dbReference type="Pfam" id="PF04204">
    <property type="entry name" value="HTS"/>
    <property type="match status" value="1"/>
</dbReference>
<dbReference type="PIRSF" id="PIRSF000450">
    <property type="entry name" value="H_ser_succinyltr"/>
    <property type="match status" value="1"/>
</dbReference>
<dbReference type="SUPFAM" id="SSF52317">
    <property type="entry name" value="Class I glutamine amidotransferase-like"/>
    <property type="match status" value="1"/>
</dbReference>
<organism>
    <name type="scientific">Yersinia pseudotuberculosis serotype I (strain IP32953)</name>
    <dbReference type="NCBI Taxonomy" id="273123"/>
    <lineage>
        <taxon>Bacteria</taxon>
        <taxon>Pseudomonadati</taxon>
        <taxon>Pseudomonadota</taxon>
        <taxon>Gammaproteobacteria</taxon>
        <taxon>Enterobacterales</taxon>
        <taxon>Yersiniaceae</taxon>
        <taxon>Yersinia</taxon>
    </lineage>
</organism>
<feature type="chain" id="PRO_0000199769" description="Homoserine O-succinyltransferase">
    <location>
        <begin position="1"/>
        <end position="309"/>
    </location>
</feature>
<feature type="active site" description="Acyl-thioester intermediate" evidence="1">
    <location>
        <position position="142"/>
    </location>
</feature>
<feature type="active site" description="Proton acceptor" evidence="1">
    <location>
        <position position="235"/>
    </location>
</feature>
<feature type="active site" evidence="1">
    <location>
        <position position="237"/>
    </location>
</feature>
<feature type="binding site" evidence="1">
    <location>
        <position position="163"/>
    </location>
    <ligand>
        <name>substrate</name>
    </ligand>
</feature>
<feature type="binding site" evidence="1">
    <location>
        <position position="192"/>
    </location>
    <ligand>
        <name>substrate</name>
    </ligand>
</feature>
<feature type="binding site" evidence="1">
    <location>
        <position position="249"/>
    </location>
    <ligand>
        <name>substrate</name>
    </ligand>
</feature>
<feature type="site" description="Important for acyl-CoA specificity" evidence="1">
    <location>
        <position position="111"/>
    </location>
</feature>
<feature type="site" description="Important for substrate specificity" evidence="1">
    <location>
        <position position="192"/>
    </location>
</feature>
<accession>Q664W1</accession>
<keyword id="KW-0012">Acyltransferase</keyword>
<keyword id="KW-0028">Amino-acid biosynthesis</keyword>
<keyword id="KW-0963">Cytoplasm</keyword>
<keyword id="KW-0486">Methionine biosynthesis</keyword>
<keyword id="KW-0808">Transferase</keyword>
<sequence>MPIRVPDELPAVSFLRNENVFVMASSRAKTQEIRPLKVLILNLMPKKIETENQFLRLLSNSPLQVDIQLLRVDSRESKNTPTEHLNNFYCDFEDIQDQNFDGLIVTGAPLGLVDFCDVAYWPQIERIIAWAKEHVTSTLFVCWAVQAALNILYGIPKMTREVKLSGIYQHQTLEPLALLTRGFDETFLAPHSRYADFPVEVLQQYTDLDILVSSEEAGAYLFASKDKRVAFVTGHPEYDVDTLAGEYQRDLAAGLNPQVPLNYFPSDDASLRPKASWRSHGHLLFANWLNYYVYQITPFDLRHMNPTLD</sequence>
<evidence type="ECO:0000255" key="1">
    <source>
        <dbReference type="HAMAP-Rule" id="MF_00295"/>
    </source>
</evidence>
<comment type="function">
    <text evidence="1">Transfers a succinyl group from succinyl-CoA to L-homoserine, forming succinyl-L-homoserine.</text>
</comment>
<comment type="catalytic activity">
    <reaction evidence="1">
        <text>L-homoserine + succinyl-CoA = O-succinyl-L-homoserine + CoA</text>
        <dbReference type="Rhea" id="RHEA:22008"/>
        <dbReference type="ChEBI" id="CHEBI:57287"/>
        <dbReference type="ChEBI" id="CHEBI:57292"/>
        <dbReference type="ChEBI" id="CHEBI:57476"/>
        <dbReference type="ChEBI" id="CHEBI:57661"/>
        <dbReference type="EC" id="2.3.1.46"/>
    </reaction>
</comment>
<comment type="pathway">
    <text evidence="1">Amino-acid biosynthesis; L-methionine biosynthesis via de novo pathway; O-succinyl-L-homoserine from L-homoserine: step 1/1.</text>
</comment>
<comment type="subcellular location">
    <subcellularLocation>
        <location evidence="1">Cytoplasm</location>
    </subcellularLocation>
</comment>
<comment type="similarity">
    <text evidence="1">Belongs to the MetA family.</text>
</comment>